<evidence type="ECO:0000269" key="1">
    <source>
    </source>
</evidence>
<evidence type="ECO:0000303" key="2">
    <source>
    </source>
</evidence>
<accession>P85376</accession>
<protein>
    <recommendedName>
        <fullName evidence="2">Uncharacterized protein SMPP9</fullName>
    </recommendedName>
</protein>
<name>SMP09_NAUMA</name>
<proteinExistence type="evidence at protein level"/>
<reference key="1">
    <citation type="journal article" date="2009" name="ChemBioChem">
        <title>Evolution of nacre: biochemistry and 'shellomics' of the shell organic matrix of the cephalopod Nautilus macromphalus.</title>
        <authorList>
            <person name="Marie B."/>
            <person name="Marin F."/>
            <person name="Marie A."/>
            <person name="Bedouet L."/>
            <person name="Dubost L."/>
            <person name="Alcaraz G."/>
            <person name="Milet C."/>
            <person name="Luquet G."/>
        </authorList>
    </citation>
    <scope>PROTEIN SEQUENCE</scope>
    <scope>TISSUE SPECIFICITY</scope>
    <source>
        <tissue>Shell</tissue>
    </source>
</reference>
<keyword id="KW-0903">Direct protein sequencing</keyword>
<organism>
    <name type="scientific">Nautilus macromphalus</name>
    <name type="common">Bellybutton nautilus</name>
    <dbReference type="NCBI Taxonomy" id="34576"/>
    <lineage>
        <taxon>Eukaryota</taxon>
        <taxon>Metazoa</taxon>
        <taxon>Spiralia</taxon>
        <taxon>Lophotrochozoa</taxon>
        <taxon>Mollusca</taxon>
        <taxon>Cephalopoda</taxon>
        <taxon>Nautiloidea</taxon>
        <taxon>Nautilida</taxon>
        <taxon>Nautilidae</taxon>
        <taxon>Nautilus</taxon>
    </lineage>
</organism>
<feature type="chain" id="PRO_0000371490" description="Uncharacterized protein SMPP9">
    <location>
        <begin position="1" status="less than"/>
        <end position="9" status="greater than"/>
    </location>
</feature>
<feature type="unsure residue" description="L or I" evidence="1">
    <location>
        <position position="7"/>
    </location>
</feature>
<feature type="non-terminal residue" evidence="2">
    <location>
        <position position="1"/>
    </location>
</feature>
<feature type="non-terminal residue" evidence="2">
    <location>
        <position position="9"/>
    </location>
</feature>
<sequence>SFDSSVLTK</sequence>
<comment type="tissue specificity">
    <text evidence="1">Nacreous layer of shell.</text>
</comment>